<protein>
    <recommendedName>
        <fullName evidence="1">Holliday junction branch migration complex subunit RuvA</fullName>
    </recommendedName>
</protein>
<organism>
    <name type="scientific">Verminephrobacter eiseniae (strain EF01-2)</name>
    <dbReference type="NCBI Taxonomy" id="391735"/>
    <lineage>
        <taxon>Bacteria</taxon>
        <taxon>Pseudomonadati</taxon>
        <taxon>Pseudomonadota</taxon>
        <taxon>Betaproteobacteria</taxon>
        <taxon>Burkholderiales</taxon>
        <taxon>Comamonadaceae</taxon>
        <taxon>Verminephrobacter</taxon>
    </lineage>
</organism>
<reference key="1">
    <citation type="submission" date="2006-12" db="EMBL/GenBank/DDBJ databases">
        <title>Complete sequence of chromosome 1 of Verminephrobacter eiseniae EF01-2.</title>
        <authorList>
            <person name="Copeland A."/>
            <person name="Lucas S."/>
            <person name="Lapidus A."/>
            <person name="Barry K."/>
            <person name="Detter J.C."/>
            <person name="Glavina del Rio T."/>
            <person name="Dalin E."/>
            <person name="Tice H."/>
            <person name="Pitluck S."/>
            <person name="Chertkov O."/>
            <person name="Brettin T."/>
            <person name="Bruce D."/>
            <person name="Han C."/>
            <person name="Tapia R."/>
            <person name="Gilna P."/>
            <person name="Schmutz J."/>
            <person name="Larimer F."/>
            <person name="Land M."/>
            <person name="Hauser L."/>
            <person name="Kyrpides N."/>
            <person name="Kim E."/>
            <person name="Stahl D."/>
            <person name="Richardson P."/>
        </authorList>
    </citation>
    <scope>NUCLEOTIDE SEQUENCE [LARGE SCALE GENOMIC DNA]</scope>
    <source>
        <strain>EF01-2</strain>
    </source>
</reference>
<evidence type="ECO:0000255" key="1">
    <source>
        <dbReference type="HAMAP-Rule" id="MF_00031"/>
    </source>
</evidence>
<accession>A1WQ66</accession>
<proteinExistence type="inferred from homology"/>
<dbReference type="EMBL" id="CP000542">
    <property type="protein sequence ID" value="ABM59773.1"/>
    <property type="molecule type" value="Genomic_DNA"/>
</dbReference>
<dbReference type="RefSeq" id="WP_011811760.1">
    <property type="nucleotide sequence ID" value="NC_008786.1"/>
</dbReference>
<dbReference type="SMR" id="A1WQ66"/>
<dbReference type="STRING" id="391735.Veis_4068"/>
<dbReference type="GeneID" id="76462412"/>
<dbReference type="KEGG" id="vei:Veis_4068"/>
<dbReference type="eggNOG" id="COG0632">
    <property type="taxonomic scope" value="Bacteria"/>
</dbReference>
<dbReference type="HOGENOM" id="CLU_087936_0_0_4"/>
<dbReference type="OrthoDB" id="5293449at2"/>
<dbReference type="Proteomes" id="UP000000374">
    <property type="component" value="Chromosome"/>
</dbReference>
<dbReference type="GO" id="GO:0005737">
    <property type="term" value="C:cytoplasm"/>
    <property type="evidence" value="ECO:0007669"/>
    <property type="project" value="UniProtKB-SubCell"/>
</dbReference>
<dbReference type="GO" id="GO:0009379">
    <property type="term" value="C:Holliday junction helicase complex"/>
    <property type="evidence" value="ECO:0007669"/>
    <property type="project" value="InterPro"/>
</dbReference>
<dbReference type="GO" id="GO:0048476">
    <property type="term" value="C:Holliday junction resolvase complex"/>
    <property type="evidence" value="ECO:0007669"/>
    <property type="project" value="UniProtKB-UniRule"/>
</dbReference>
<dbReference type="GO" id="GO:0005524">
    <property type="term" value="F:ATP binding"/>
    <property type="evidence" value="ECO:0007669"/>
    <property type="project" value="InterPro"/>
</dbReference>
<dbReference type="GO" id="GO:0000400">
    <property type="term" value="F:four-way junction DNA binding"/>
    <property type="evidence" value="ECO:0007669"/>
    <property type="project" value="UniProtKB-UniRule"/>
</dbReference>
<dbReference type="GO" id="GO:0009378">
    <property type="term" value="F:four-way junction helicase activity"/>
    <property type="evidence" value="ECO:0007669"/>
    <property type="project" value="InterPro"/>
</dbReference>
<dbReference type="GO" id="GO:0006310">
    <property type="term" value="P:DNA recombination"/>
    <property type="evidence" value="ECO:0007669"/>
    <property type="project" value="UniProtKB-UniRule"/>
</dbReference>
<dbReference type="GO" id="GO:0006281">
    <property type="term" value="P:DNA repair"/>
    <property type="evidence" value="ECO:0007669"/>
    <property type="project" value="UniProtKB-UniRule"/>
</dbReference>
<dbReference type="Gene3D" id="1.10.150.20">
    <property type="entry name" value="5' to 3' exonuclease, C-terminal subdomain"/>
    <property type="match status" value="1"/>
</dbReference>
<dbReference type="Gene3D" id="1.10.8.10">
    <property type="entry name" value="DNA helicase RuvA subunit, C-terminal domain"/>
    <property type="match status" value="1"/>
</dbReference>
<dbReference type="Gene3D" id="2.40.50.140">
    <property type="entry name" value="Nucleic acid-binding proteins"/>
    <property type="match status" value="1"/>
</dbReference>
<dbReference type="HAMAP" id="MF_00031">
    <property type="entry name" value="DNA_HJ_migration_RuvA"/>
    <property type="match status" value="1"/>
</dbReference>
<dbReference type="InterPro" id="IPR013849">
    <property type="entry name" value="DNA_helicase_Holl-junc_RuvA_I"/>
</dbReference>
<dbReference type="InterPro" id="IPR003583">
    <property type="entry name" value="Hlx-hairpin-Hlx_DNA-bd_motif"/>
</dbReference>
<dbReference type="InterPro" id="IPR012340">
    <property type="entry name" value="NA-bd_OB-fold"/>
</dbReference>
<dbReference type="InterPro" id="IPR000085">
    <property type="entry name" value="RuvA"/>
</dbReference>
<dbReference type="InterPro" id="IPR010994">
    <property type="entry name" value="RuvA_2-like"/>
</dbReference>
<dbReference type="InterPro" id="IPR011114">
    <property type="entry name" value="RuvA_C"/>
</dbReference>
<dbReference type="InterPro" id="IPR036267">
    <property type="entry name" value="RuvA_C_sf"/>
</dbReference>
<dbReference type="NCBIfam" id="TIGR00084">
    <property type="entry name" value="ruvA"/>
    <property type="match status" value="1"/>
</dbReference>
<dbReference type="Pfam" id="PF14520">
    <property type="entry name" value="HHH_5"/>
    <property type="match status" value="1"/>
</dbReference>
<dbReference type="Pfam" id="PF07499">
    <property type="entry name" value="RuvA_C"/>
    <property type="match status" value="1"/>
</dbReference>
<dbReference type="Pfam" id="PF01330">
    <property type="entry name" value="RuvA_N"/>
    <property type="match status" value="1"/>
</dbReference>
<dbReference type="SMART" id="SM00278">
    <property type="entry name" value="HhH1"/>
    <property type="match status" value="2"/>
</dbReference>
<dbReference type="SUPFAM" id="SSF46929">
    <property type="entry name" value="DNA helicase RuvA subunit, C-terminal domain"/>
    <property type="match status" value="1"/>
</dbReference>
<dbReference type="SUPFAM" id="SSF50249">
    <property type="entry name" value="Nucleic acid-binding proteins"/>
    <property type="match status" value="1"/>
</dbReference>
<dbReference type="SUPFAM" id="SSF47781">
    <property type="entry name" value="RuvA domain 2-like"/>
    <property type="match status" value="1"/>
</dbReference>
<gene>
    <name evidence="1" type="primary">ruvA</name>
    <name type="ordered locus">Veis_4068</name>
</gene>
<feature type="chain" id="PRO_1000002592" description="Holliday junction branch migration complex subunit RuvA">
    <location>
        <begin position="1"/>
        <end position="191"/>
    </location>
</feature>
<feature type="region of interest" description="Domain I" evidence="1">
    <location>
        <begin position="1"/>
        <end position="64"/>
    </location>
</feature>
<feature type="region of interest" description="Domain II" evidence="1">
    <location>
        <begin position="65"/>
        <end position="140"/>
    </location>
</feature>
<feature type="region of interest" description="Flexible linker" evidence="1">
    <location>
        <begin position="140"/>
        <end position="142"/>
    </location>
</feature>
<feature type="region of interest" description="Domain III" evidence="1">
    <location>
        <begin position="143"/>
        <end position="191"/>
    </location>
</feature>
<name>RUVA_VEREI</name>
<keyword id="KW-0963">Cytoplasm</keyword>
<keyword id="KW-0227">DNA damage</keyword>
<keyword id="KW-0233">DNA recombination</keyword>
<keyword id="KW-0234">DNA repair</keyword>
<keyword id="KW-0238">DNA-binding</keyword>
<keyword id="KW-1185">Reference proteome</keyword>
<comment type="function">
    <text evidence="1">The RuvA-RuvB-RuvC complex processes Holliday junction (HJ) DNA during genetic recombination and DNA repair, while the RuvA-RuvB complex plays an important role in the rescue of blocked DNA replication forks via replication fork reversal (RFR). RuvA specifically binds to HJ cruciform DNA, conferring on it an open structure. The RuvB hexamer acts as an ATP-dependent pump, pulling dsDNA into and through the RuvAB complex. HJ branch migration allows RuvC to scan DNA until it finds its consensus sequence, where it cleaves and resolves the cruciform DNA.</text>
</comment>
<comment type="subunit">
    <text evidence="1">Homotetramer. Forms an RuvA(8)-RuvB(12)-Holliday junction (HJ) complex. HJ DNA is sandwiched between 2 RuvA tetramers; dsDNA enters through RuvA and exits via RuvB. An RuvB hexamer assembles on each DNA strand where it exits the tetramer. Each RuvB hexamer is contacted by two RuvA subunits (via domain III) on 2 adjacent RuvB subunits; this complex drives branch migration. In the full resolvosome a probable DNA-RuvA(4)-RuvB(12)-RuvC(2) complex forms which resolves the HJ.</text>
</comment>
<comment type="subcellular location">
    <subcellularLocation>
        <location evidence="1">Cytoplasm</location>
    </subcellularLocation>
</comment>
<comment type="domain">
    <text evidence="1">Has three domains with a flexible linker between the domains II and III and assumes an 'L' shape. Domain III is highly mobile and contacts RuvB.</text>
</comment>
<comment type="similarity">
    <text evidence="1">Belongs to the RuvA family.</text>
</comment>
<sequence>MIGKLTGTLLEKNPPEVLLDCHGVGYEVNVPMSSFYNLPAVGERISLLTQFIVREDAQLLYGFATAPERQAFRALIKITGVGPRMALSILSGMSVADLAQAIARQEAARLVKVPGVGKRTAERLLLELKGKLGADLGASHGPAVSGAQADILQALLALGYNDKEAAAALKALPAQVEVSDGIKWALKALTK</sequence>